<sequence length="369" mass="40448">MCGNPAVGNGTRALILVGGYGTRLRPLTLSTPKPLVEFANKPILLHQLEALVDAGCRQVILAVSYRAEQMEKELKVEAKKLGVELIFSHETEPLGTAGPLALAKTILAASSEPFFVLNSDVICDFPFKQLVQFHCNHGKEGTIVVTKVEEPSKYGVVLYDENGCIKNFIEKPQEFVSNKINAGIYIFNPSVLDRIEVKPTSIEKEVFPEMTQQQELYAMDLTGFWMDIGQPKDFLTGMCLYLSSLRQKQSPKLYTGPGVVGNVLVDPTAKIGEGCRIGPNVTIGPDVVIEDGVCIKRSTILKGAIVRSHSWLDSCIVGWRSTVGRWVRIEGITVLGEDVIVKDELYINGGQVLPHKSIAASVPEPQIIM</sequence>
<comment type="function">
    <text evidence="1 2">Catalytic subunit of the GMPPA-GMPPB mannose-1-phosphate guanylyltransferase complex (By similarity). Catalyzes the formation of GDP-mannose, an essential precursor of glycan moieties of glycoproteins and glycolipids (By similarity). Can catalyze the reverse reaction in vitro (By similarity). Together with GMPPA regulates GDP-alpha-D-mannose levels (By similarity).</text>
</comment>
<comment type="catalytic activity">
    <reaction evidence="1">
        <text>alpha-D-mannose 1-phosphate + GTP + H(+) = GDP-alpha-D-mannose + diphosphate</text>
        <dbReference type="Rhea" id="RHEA:15229"/>
        <dbReference type="ChEBI" id="CHEBI:15378"/>
        <dbReference type="ChEBI" id="CHEBI:33019"/>
        <dbReference type="ChEBI" id="CHEBI:37565"/>
        <dbReference type="ChEBI" id="CHEBI:57527"/>
        <dbReference type="ChEBI" id="CHEBI:58409"/>
        <dbReference type="EC" id="2.7.7.13"/>
    </reaction>
    <physiologicalReaction direction="left-to-right" evidence="2">
        <dbReference type="Rhea" id="RHEA:15230"/>
    </physiologicalReaction>
    <physiologicalReaction direction="right-to-left" evidence="2">
        <dbReference type="Rhea" id="RHEA:15231"/>
    </physiologicalReaction>
</comment>
<comment type="cofactor">
    <cofactor evidence="2">
        <name>Mg(2+)</name>
        <dbReference type="ChEBI" id="CHEBI:18420"/>
    </cofactor>
    <text evidence="2">Coordinates binding with substrate and required for enzymatic activity.</text>
</comment>
<comment type="activity regulation">
    <text evidence="2">Enzyme activity is reduced by incorporation into the GMPPA-GMPPB mannose-1-phosphate guanylyltransferase complex. Allosterically inhibited, when part of the GMPPA-GMPPB complex, by GDP-alpha-D-mannose binding to Gmppa.</text>
</comment>
<comment type="pathway">
    <text evidence="1">Nucleotide-sugar biosynthesis; GDP-alpha-D-mannose biosynthesis; GDP-alpha-D-mannose from alpha-D-mannose 1-phosphate (GTP route): step 1/1.</text>
</comment>
<comment type="subunit">
    <text evidence="2">Component of the GMPPA-GMPPB mannose-1-phosphate guanylyltransferase complex composed of 4 Gmppa subunits and 8 Gmppb subunits; the complex is organized into three layers, a central layer made up of 2 Gmppa dimers sandwiched between two layers each made up of 2 Gmppb dimers. Gmppb catalytic activity is reduced when part of the complex and binding of GDP-alpha-D-Mannose by Gmppa induces allosteric feedback inhibition of Gmppb.</text>
</comment>
<comment type="interaction">
    <interactant intactId="EBI-165604">
        <id>Q7JZB4</id>
    </interactant>
    <interactant intactId="EBI-101652">
        <id>Q8SXU3</id>
        <label>Gmppa</label>
    </interactant>
    <organismsDiffer>false</organismsDiffer>
    <experiments>7</experiments>
</comment>
<comment type="domain">
    <text evidence="2">The N-terminal substrate-binding domain adopts a Rossman-like fold and has a binding pocket for GTP or GDP-alpha-D-mannose (By similarity). Substrate binding is coordinated by an Mg(2+) ion (By similarity).</text>
</comment>
<comment type="domain">
    <text evidence="2">The C-terminal domain consists of a series of tandem hexapeptide repeats that adopt a beta-helix conformation (By similarity). The beta-helix forms several protein interaction surfaces involved in assembly of the GMPPA-GMPPB mannose-1-phosphate guanylyltransferase complex (By similarity).</text>
</comment>
<comment type="similarity">
    <text evidence="3">Belongs to the transferase hexapeptide repeat family.</text>
</comment>
<evidence type="ECO:0000250" key="1">
    <source>
        <dbReference type="UniProtKB" id="P0C5I2"/>
    </source>
</evidence>
<evidence type="ECO:0000250" key="2">
    <source>
        <dbReference type="UniProtKB" id="Q9Y5P6"/>
    </source>
</evidence>
<evidence type="ECO:0000305" key="3"/>
<evidence type="ECO:0000312" key="4">
    <source>
        <dbReference type="FlyBase" id="FBgn0037279"/>
    </source>
</evidence>
<evidence type="ECO:0000312" key="5">
    <source>
        <dbReference type="Proteomes" id="UP000000803"/>
    </source>
</evidence>
<gene>
    <name evidence="4" type="primary">Gmppb</name>
    <name evidence="4" type="ORF">CG1129</name>
</gene>
<keyword id="KW-0342">GTP-binding</keyword>
<keyword id="KW-0460">Magnesium</keyword>
<keyword id="KW-0479">Metal-binding</keyword>
<keyword id="KW-0547">Nucleotide-binding</keyword>
<keyword id="KW-0548">Nucleotidyltransferase</keyword>
<keyword id="KW-1185">Reference proteome</keyword>
<keyword id="KW-0808">Transferase</keyword>
<name>GMPPB_DROME</name>
<reference key="1">
    <citation type="journal article" date="2000" name="Science">
        <title>The genome sequence of Drosophila melanogaster.</title>
        <authorList>
            <person name="Adams M.D."/>
            <person name="Celniker S.E."/>
            <person name="Holt R.A."/>
            <person name="Evans C.A."/>
            <person name="Gocayne J.D."/>
            <person name="Amanatides P.G."/>
            <person name="Scherer S.E."/>
            <person name="Li P.W."/>
            <person name="Hoskins R.A."/>
            <person name="Galle R.F."/>
            <person name="George R.A."/>
            <person name="Lewis S.E."/>
            <person name="Richards S."/>
            <person name="Ashburner M."/>
            <person name="Henderson S.N."/>
            <person name="Sutton G.G."/>
            <person name="Wortman J.R."/>
            <person name="Yandell M.D."/>
            <person name="Zhang Q."/>
            <person name="Chen L.X."/>
            <person name="Brandon R.C."/>
            <person name="Rogers Y.-H.C."/>
            <person name="Blazej R.G."/>
            <person name="Champe M."/>
            <person name="Pfeiffer B.D."/>
            <person name="Wan K.H."/>
            <person name="Doyle C."/>
            <person name="Baxter E.G."/>
            <person name="Helt G."/>
            <person name="Nelson C.R."/>
            <person name="Miklos G.L.G."/>
            <person name="Abril J.F."/>
            <person name="Agbayani A."/>
            <person name="An H.-J."/>
            <person name="Andrews-Pfannkoch C."/>
            <person name="Baldwin D."/>
            <person name="Ballew R.M."/>
            <person name="Basu A."/>
            <person name="Baxendale J."/>
            <person name="Bayraktaroglu L."/>
            <person name="Beasley E.M."/>
            <person name="Beeson K.Y."/>
            <person name="Benos P.V."/>
            <person name="Berman B.P."/>
            <person name="Bhandari D."/>
            <person name="Bolshakov S."/>
            <person name="Borkova D."/>
            <person name="Botchan M.R."/>
            <person name="Bouck J."/>
            <person name="Brokstein P."/>
            <person name="Brottier P."/>
            <person name="Burtis K.C."/>
            <person name="Busam D.A."/>
            <person name="Butler H."/>
            <person name="Cadieu E."/>
            <person name="Center A."/>
            <person name="Chandra I."/>
            <person name="Cherry J.M."/>
            <person name="Cawley S."/>
            <person name="Dahlke C."/>
            <person name="Davenport L.B."/>
            <person name="Davies P."/>
            <person name="de Pablos B."/>
            <person name="Delcher A."/>
            <person name="Deng Z."/>
            <person name="Mays A.D."/>
            <person name="Dew I."/>
            <person name="Dietz S.M."/>
            <person name="Dodson K."/>
            <person name="Doup L.E."/>
            <person name="Downes M."/>
            <person name="Dugan-Rocha S."/>
            <person name="Dunkov B.C."/>
            <person name="Dunn P."/>
            <person name="Durbin K.J."/>
            <person name="Evangelista C.C."/>
            <person name="Ferraz C."/>
            <person name="Ferriera S."/>
            <person name="Fleischmann W."/>
            <person name="Fosler C."/>
            <person name="Gabrielian A.E."/>
            <person name="Garg N.S."/>
            <person name="Gelbart W.M."/>
            <person name="Glasser K."/>
            <person name="Glodek A."/>
            <person name="Gong F."/>
            <person name="Gorrell J.H."/>
            <person name="Gu Z."/>
            <person name="Guan P."/>
            <person name="Harris M."/>
            <person name="Harris N.L."/>
            <person name="Harvey D.A."/>
            <person name="Heiman T.J."/>
            <person name="Hernandez J.R."/>
            <person name="Houck J."/>
            <person name="Hostin D."/>
            <person name="Houston K.A."/>
            <person name="Howland T.J."/>
            <person name="Wei M.-H."/>
            <person name="Ibegwam C."/>
            <person name="Jalali M."/>
            <person name="Kalush F."/>
            <person name="Karpen G.H."/>
            <person name="Ke Z."/>
            <person name="Kennison J.A."/>
            <person name="Ketchum K.A."/>
            <person name="Kimmel B.E."/>
            <person name="Kodira C.D."/>
            <person name="Kraft C.L."/>
            <person name="Kravitz S."/>
            <person name="Kulp D."/>
            <person name="Lai Z."/>
            <person name="Lasko P."/>
            <person name="Lei Y."/>
            <person name="Levitsky A.A."/>
            <person name="Li J.H."/>
            <person name="Li Z."/>
            <person name="Liang Y."/>
            <person name="Lin X."/>
            <person name="Liu X."/>
            <person name="Mattei B."/>
            <person name="McIntosh T.C."/>
            <person name="McLeod M.P."/>
            <person name="McPherson D."/>
            <person name="Merkulov G."/>
            <person name="Milshina N.V."/>
            <person name="Mobarry C."/>
            <person name="Morris J."/>
            <person name="Moshrefi A."/>
            <person name="Mount S.M."/>
            <person name="Moy M."/>
            <person name="Murphy B."/>
            <person name="Murphy L."/>
            <person name="Muzny D.M."/>
            <person name="Nelson D.L."/>
            <person name="Nelson D.R."/>
            <person name="Nelson K.A."/>
            <person name="Nixon K."/>
            <person name="Nusskern D.R."/>
            <person name="Pacleb J.M."/>
            <person name="Palazzolo M."/>
            <person name="Pittman G.S."/>
            <person name="Pan S."/>
            <person name="Pollard J."/>
            <person name="Puri V."/>
            <person name="Reese M.G."/>
            <person name="Reinert K."/>
            <person name="Remington K."/>
            <person name="Saunders R.D.C."/>
            <person name="Scheeler F."/>
            <person name="Shen H."/>
            <person name="Shue B.C."/>
            <person name="Siden-Kiamos I."/>
            <person name="Simpson M."/>
            <person name="Skupski M.P."/>
            <person name="Smith T.J."/>
            <person name="Spier E."/>
            <person name="Spradling A.C."/>
            <person name="Stapleton M."/>
            <person name="Strong R."/>
            <person name="Sun E."/>
            <person name="Svirskas R."/>
            <person name="Tector C."/>
            <person name="Turner R."/>
            <person name="Venter E."/>
            <person name="Wang A.H."/>
            <person name="Wang X."/>
            <person name="Wang Z.-Y."/>
            <person name="Wassarman D.A."/>
            <person name="Weinstock G.M."/>
            <person name="Weissenbach J."/>
            <person name="Williams S.M."/>
            <person name="Woodage T."/>
            <person name="Worley K.C."/>
            <person name="Wu D."/>
            <person name="Yang S."/>
            <person name="Yao Q.A."/>
            <person name="Ye J."/>
            <person name="Yeh R.-F."/>
            <person name="Zaveri J.S."/>
            <person name="Zhan M."/>
            <person name="Zhang G."/>
            <person name="Zhao Q."/>
            <person name="Zheng L."/>
            <person name="Zheng X.H."/>
            <person name="Zhong F.N."/>
            <person name="Zhong W."/>
            <person name="Zhou X."/>
            <person name="Zhu S.C."/>
            <person name="Zhu X."/>
            <person name="Smith H.O."/>
            <person name="Gibbs R.A."/>
            <person name="Myers E.W."/>
            <person name="Rubin G.M."/>
            <person name="Venter J.C."/>
        </authorList>
    </citation>
    <scope>NUCLEOTIDE SEQUENCE [LARGE SCALE GENOMIC DNA]</scope>
    <source>
        <strain>Berkeley</strain>
    </source>
</reference>
<reference key="2">
    <citation type="journal article" date="2002" name="Genome Biol.">
        <title>Annotation of the Drosophila melanogaster euchromatic genome: a systematic review.</title>
        <authorList>
            <person name="Misra S."/>
            <person name="Crosby M.A."/>
            <person name="Mungall C.J."/>
            <person name="Matthews B.B."/>
            <person name="Campbell K.S."/>
            <person name="Hradecky P."/>
            <person name="Huang Y."/>
            <person name="Kaminker J.S."/>
            <person name="Millburn G.H."/>
            <person name="Prochnik S.E."/>
            <person name="Smith C.D."/>
            <person name="Tupy J.L."/>
            <person name="Whitfield E.J."/>
            <person name="Bayraktaroglu L."/>
            <person name="Berman B.P."/>
            <person name="Bettencourt B.R."/>
            <person name="Celniker S.E."/>
            <person name="de Grey A.D.N.J."/>
            <person name="Drysdale R.A."/>
            <person name="Harris N.L."/>
            <person name="Richter J."/>
            <person name="Russo S."/>
            <person name="Schroeder A.J."/>
            <person name="Shu S.Q."/>
            <person name="Stapleton M."/>
            <person name="Yamada C."/>
            <person name="Ashburner M."/>
            <person name="Gelbart W.M."/>
            <person name="Rubin G.M."/>
            <person name="Lewis S.E."/>
        </authorList>
    </citation>
    <scope>GENOME REANNOTATION</scope>
    <source>
        <strain>Berkeley</strain>
    </source>
</reference>
<reference key="3">
    <citation type="journal article" date="2002" name="Genome Biol.">
        <title>A Drosophila full-length cDNA resource.</title>
        <authorList>
            <person name="Stapleton M."/>
            <person name="Carlson J.W."/>
            <person name="Brokstein P."/>
            <person name="Yu C."/>
            <person name="Champe M."/>
            <person name="George R.A."/>
            <person name="Guarin H."/>
            <person name="Kronmiller B."/>
            <person name="Pacleb J.M."/>
            <person name="Park S."/>
            <person name="Wan K.H."/>
            <person name="Rubin G.M."/>
            <person name="Celniker S.E."/>
        </authorList>
    </citation>
    <scope>NUCLEOTIDE SEQUENCE [LARGE SCALE MRNA]</scope>
    <source>
        <strain>Berkeley</strain>
        <tissue>Embryo</tissue>
        <tissue>Head</tissue>
    </source>
</reference>
<organism evidence="5">
    <name type="scientific">Drosophila melanogaster</name>
    <name type="common">Fruit fly</name>
    <dbReference type="NCBI Taxonomy" id="7227"/>
    <lineage>
        <taxon>Eukaryota</taxon>
        <taxon>Metazoa</taxon>
        <taxon>Ecdysozoa</taxon>
        <taxon>Arthropoda</taxon>
        <taxon>Hexapoda</taxon>
        <taxon>Insecta</taxon>
        <taxon>Pterygota</taxon>
        <taxon>Neoptera</taxon>
        <taxon>Endopterygota</taxon>
        <taxon>Diptera</taxon>
        <taxon>Brachycera</taxon>
        <taxon>Muscomorpha</taxon>
        <taxon>Ephydroidea</taxon>
        <taxon>Drosophilidae</taxon>
        <taxon>Drosophila</taxon>
        <taxon>Sophophora</taxon>
    </lineage>
</organism>
<protein>
    <recommendedName>
        <fullName evidence="3">Mannose-1-phosphate guanylyltransferase catalytic subunit beta</fullName>
        <ecNumber evidence="1">2.7.7.13</ecNumber>
    </recommendedName>
    <alternativeName>
        <fullName>GDP-mannose pyrophosphorylase B</fullName>
    </alternativeName>
    <alternativeName>
        <fullName>GTP-mannose-1-phosphate guanylyltransferase beta</fullName>
    </alternativeName>
</protein>
<accession>Q7JZB4</accession>
<feature type="chain" id="PRO_0000307171" description="Mannose-1-phosphate guanylyltransferase catalytic subunit beta">
    <location>
        <begin position="1"/>
        <end position="369"/>
    </location>
</feature>
<feature type="region of interest" description="Substrate-binding domain" evidence="2">
    <location>
        <begin position="12"/>
        <end position="231"/>
    </location>
</feature>
<feature type="region of interest" description="Hexapeptide repeat domain" evidence="2">
    <location>
        <begin position="254"/>
        <end position="369"/>
    </location>
</feature>
<feature type="active site" evidence="2">
    <location>
        <position position="171"/>
    </location>
</feature>
<feature type="binding site" evidence="2">
    <location>
        <position position="120"/>
    </location>
    <ligand>
        <name>GDP-alpha-D-mannose</name>
        <dbReference type="ChEBI" id="CHEBI:57527"/>
    </ligand>
</feature>
<feature type="binding site" evidence="2">
    <location>
        <position position="120"/>
    </location>
    <ligand>
        <name>Mg(2+)</name>
        <dbReference type="ChEBI" id="CHEBI:18420"/>
    </ligand>
</feature>
<feature type="binding site" evidence="2">
    <location>
        <position position="227"/>
    </location>
    <ligand>
        <name>GDP-alpha-D-mannose</name>
        <dbReference type="ChEBI" id="CHEBI:57527"/>
    </ligand>
</feature>
<feature type="binding site" evidence="2">
    <location>
        <position position="227"/>
    </location>
    <ligand>
        <name>Mg(2+)</name>
        <dbReference type="ChEBI" id="CHEBI:18420"/>
    </ligand>
</feature>
<dbReference type="EC" id="2.7.7.13" evidence="1"/>
<dbReference type="EMBL" id="AE014297">
    <property type="protein sequence ID" value="AAG22216.1"/>
    <property type="molecule type" value="Genomic_DNA"/>
</dbReference>
<dbReference type="EMBL" id="AY061013">
    <property type="protein sequence ID" value="AAL28561.1"/>
    <property type="molecule type" value="mRNA"/>
</dbReference>
<dbReference type="EMBL" id="AY071411">
    <property type="protein sequence ID" value="AAL49033.1"/>
    <property type="molecule type" value="mRNA"/>
</dbReference>
<dbReference type="RefSeq" id="NP_001189177.2">
    <property type="nucleotide sequence ID" value="NM_001202248.2"/>
</dbReference>
<dbReference type="RefSeq" id="NP_001287164.1">
    <property type="nucleotide sequence ID" value="NM_001300235.1"/>
</dbReference>
<dbReference type="RefSeq" id="NP_649498.1">
    <property type="nucleotide sequence ID" value="NM_141241.4"/>
</dbReference>
<dbReference type="RefSeq" id="NP_730877.1">
    <property type="nucleotide sequence ID" value="NM_169021.4"/>
</dbReference>
<dbReference type="SMR" id="Q7JZB4"/>
<dbReference type="BioGRID" id="65815">
    <property type="interactions" value="21"/>
</dbReference>
<dbReference type="FunCoup" id="Q7JZB4">
    <property type="interactions" value="1209"/>
</dbReference>
<dbReference type="IntAct" id="Q7JZB4">
    <property type="interactions" value="40"/>
</dbReference>
<dbReference type="STRING" id="7227.FBpp0311384"/>
<dbReference type="GlyGen" id="Q7JZB4">
    <property type="glycosylation" value="1 site, 1 O-linked glycan (1 site)"/>
</dbReference>
<dbReference type="SwissPalm" id="Q7JZB4"/>
<dbReference type="PaxDb" id="7227-FBpp0078510"/>
<dbReference type="DNASU" id="40599"/>
<dbReference type="EnsemblMetazoa" id="FBtr0078870">
    <property type="protein sequence ID" value="FBpp0078510"/>
    <property type="gene ID" value="FBgn0037279"/>
</dbReference>
<dbReference type="EnsemblMetazoa" id="FBtr0078871">
    <property type="protein sequence ID" value="FBpp0078511"/>
    <property type="gene ID" value="FBgn0037279"/>
</dbReference>
<dbReference type="EnsemblMetazoa" id="FBtr0345174">
    <property type="protein sequence ID" value="FBpp0311383"/>
    <property type="gene ID" value="FBgn0037279"/>
</dbReference>
<dbReference type="EnsemblMetazoa" id="FBtr0345175">
    <property type="protein sequence ID" value="FBpp0311384"/>
    <property type="gene ID" value="FBgn0037279"/>
</dbReference>
<dbReference type="GeneID" id="40599"/>
<dbReference type="KEGG" id="dme:Dmel_CG1129"/>
<dbReference type="UCSC" id="CG1129-RA">
    <property type="organism name" value="d. melanogaster"/>
</dbReference>
<dbReference type="AGR" id="FB:FBgn0037279"/>
<dbReference type="CTD" id="29925"/>
<dbReference type="FlyBase" id="FBgn0037279">
    <property type="gene designation" value="Gmppb"/>
</dbReference>
<dbReference type="VEuPathDB" id="VectorBase:FBgn0037279"/>
<dbReference type="eggNOG" id="KOG1322">
    <property type="taxonomic scope" value="Eukaryota"/>
</dbReference>
<dbReference type="GeneTree" id="ENSGT00940000158909"/>
<dbReference type="HOGENOM" id="CLU_029499_0_0_1"/>
<dbReference type="InParanoid" id="Q7JZB4"/>
<dbReference type="OMA" id="GPNCWIC"/>
<dbReference type="OrthoDB" id="1733332at2759"/>
<dbReference type="PhylomeDB" id="Q7JZB4"/>
<dbReference type="Reactome" id="R-DME-446205">
    <property type="pathway name" value="Synthesis of GDP-mannose"/>
</dbReference>
<dbReference type="UniPathway" id="UPA00126">
    <property type="reaction ID" value="UER00930"/>
</dbReference>
<dbReference type="BioGRID-ORCS" id="40599">
    <property type="hits" value="0 hits in 1 CRISPR screen"/>
</dbReference>
<dbReference type="GenomeRNAi" id="40599"/>
<dbReference type="PRO" id="PR:Q7JZB4"/>
<dbReference type="Proteomes" id="UP000000803">
    <property type="component" value="Chromosome 3R"/>
</dbReference>
<dbReference type="Bgee" id="FBgn0037279">
    <property type="expression patterns" value="Expressed in saliva-secreting gland and 176 other cell types or tissues"/>
</dbReference>
<dbReference type="ExpressionAtlas" id="Q7JZB4">
    <property type="expression patterns" value="baseline and differential"/>
</dbReference>
<dbReference type="GO" id="GO:0005737">
    <property type="term" value="C:cytoplasm"/>
    <property type="evidence" value="ECO:0000318"/>
    <property type="project" value="GO_Central"/>
</dbReference>
<dbReference type="GO" id="GO:0120508">
    <property type="term" value="C:GDP-mannose pyrophosphorylase complex"/>
    <property type="evidence" value="ECO:0000250"/>
    <property type="project" value="FlyBase"/>
</dbReference>
<dbReference type="GO" id="GO:0005525">
    <property type="term" value="F:GTP binding"/>
    <property type="evidence" value="ECO:0007669"/>
    <property type="project" value="UniProtKB-KW"/>
</dbReference>
<dbReference type="GO" id="GO:0004475">
    <property type="term" value="F:mannose-1-phosphate guanylyltransferase (GTP) activity"/>
    <property type="evidence" value="ECO:0000250"/>
    <property type="project" value="FlyBase"/>
</dbReference>
<dbReference type="GO" id="GO:0046872">
    <property type="term" value="F:metal ion binding"/>
    <property type="evidence" value="ECO:0007669"/>
    <property type="project" value="UniProtKB-KW"/>
</dbReference>
<dbReference type="GO" id="GO:0009298">
    <property type="term" value="P:GDP-mannose biosynthetic process"/>
    <property type="evidence" value="ECO:0000318"/>
    <property type="project" value="GO_Central"/>
</dbReference>
<dbReference type="GO" id="GO:0035167">
    <property type="term" value="P:larval lymph gland hemopoiesis"/>
    <property type="evidence" value="ECO:0000315"/>
    <property type="project" value="FlyBase"/>
</dbReference>
<dbReference type="GO" id="GO:0006486">
    <property type="term" value="P:protein glycosylation"/>
    <property type="evidence" value="ECO:0000318"/>
    <property type="project" value="GO_Central"/>
</dbReference>
<dbReference type="CDD" id="cd06425">
    <property type="entry name" value="M1P_guanylylT_B_like_N"/>
    <property type="match status" value="1"/>
</dbReference>
<dbReference type="FunFam" id="2.160.10.10:FF:000018">
    <property type="entry name" value="Mannose-1-phosphate guanyltransferase beta"/>
    <property type="match status" value="1"/>
</dbReference>
<dbReference type="FunFam" id="3.90.550.10:FF:000013">
    <property type="entry name" value="mannose-1-phosphate guanyltransferase beta"/>
    <property type="match status" value="1"/>
</dbReference>
<dbReference type="Gene3D" id="2.160.10.10">
    <property type="entry name" value="Hexapeptide repeat proteins"/>
    <property type="match status" value="1"/>
</dbReference>
<dbReference type="Gene3D" id="3.90.550.10">
    <property type="entry name" value="Spore Coat Polysaccharide Biosynthesis Protein SpsA, Chain A"/>
    <property type="match status" value="1"/>
</dbReference>
<dbReference type="InterPro" id="IPR056729">
    <property type="entry name" value="GMPPB_C"/>
</dbReference>
<dbReference type="InterPro" id="IPR045233">
    <property type="entry name" value="GMPPB_N"/>
</dbReference>
<dbReference type="InterPro" id="IPR018357">
    <property type="entry name" value="Hexapep_transf_CS"/>
</dbReference>
<dbReference type="InterPro" id="IPR050486">
    <property type="entry name" value="Mannose-1P_guanyltransferase"/>
</dbReference>
<dbReference type="InterPro" id="IPR005835">
    <property type="entry name" value="NTP_transferase_dom"/>
</dbReference>
<dbReference type="InterPro" id="IPR029044">
    <property type="entry name" value="Nucleotide-diphossugar_trans"/>
</dbReference>
<dbReference type="PANTHER" id="PTHR22572">
    <property type="entry name" value="SUGAR-1-PHOSPHATE GUANYL TRANSFERASE"/>
    <property type="match status" value="1"/>
</dbReference>
<dbReference type="Pfam" id="PF25087">
    <property type="entry name" value="GMPPB_C"/>
    <property type="match status" value="1"/>
</dbReference>
<dbReference type="Pfam" id="PF00483">
    <property type="entry name" value="NTP_transferase"/>
    <property type="match status" value="1"/>
</dbReference>
<dbReference type="SUPFAM" id="SSF53448">
    <property type="entry name" value="Nucleotide-diphospho-sugar transferases"/>
    <property type="match status" value="1"/>
</dbReference>
<dbReference type="PROSITE" id="PS00101">
    <property type="entry name" value="HEXAPEP_TRANSFERASES"/>
    <property type="match status" value="2"/>
</dbReference>
<proteinExistence type="evidence at protein level"/>